<keyword id="KW-0007">Acetylation</keyword>
<keyword id="KW-0143">Chaperone</keyword>
<keyword id="KW-0963">Cytoplasm</keyword>
<keyword id="KW-0903">Direct protein sequencing</keyword>
<keyword id="KW-0273">Eye lens protein</keyword>
<keyword id="KW-0325">Glycoprotein</keyword>
<keyword id="KW-0479">Metal-binding</keyword>
<keyword id="KW-0488">Methylation</keyword>
<keyword id="KW-0539">Nucleus</keyword>
<keyword id="KW-0597">Phosphoprotein</keyword>
<keyword id="KW-0862">Zinc</keyword>
<sequence length="173" mass="19807">MDVTIQHPWFKRALGPFYPSRLFDQFFGEGLFEYDLLPFLSSTISPYYRQSLFRTVLDSGISEVRSDRDKFVIFLDVKHFSPEDLTVKVQEDFVEIHGKHNERQDDHGYISREFHRRYRLPSNVDQSALSCSLSADGMLTFSGPKVQSGLDAGHSERAIPVSREEKPSSAPSS</sequence>
<dbReference type="PIR" id="E94432">
    <property type="entry name" value="CYCPAA"/>
</dbReference>
<dbReference type="SMR" id="P68283"/>
<dbReference type="GlyCosmos" id="P68283">
    <property type="glycosylation" value="1 site, No reported glycans"/>
</dbReference>
<dbReference type="GO" id="GO:0005737">
    <property type="term" value="C:cytoplasm"/>
    <property type="evidence" value="ECO:0000250"/>
    <property type="project" value="UniProtKB"/>
</dbReference>
<dbReference type="GO" id="GO:0005634">
    <property type="term" value="C:nucleus"/>
    <property type="evidence" value="ECO:0000250"/>
    <property type="project" value="UniProtKB"/>
</dbReference>
<dbReference type="GO" id="GO:0046872">
    <property type="term" value="F:metal ion binding"/>
    <property type="evidence" value="ECO:0007669"/>
    <property type="project" value="UniProtKB-KW"/>
</dbReference>
<dbReference type="GO" id="GO:0005212">
    <property type="term" value="F:structural constituent of eye lens"/>
    <property type="evidence" value="ECO:0007669"/>
    <property type="project" value="UniProtKB-KW"/>
</dbReference>
<dbReference type="GO" id="GO:0051082">
    <property type="term" value="F:unfolded protein binding"/>
    <property type="evidence" value="ECO:0007669"/>
    <property type="project" value="TreeGrafter"/>
</dbReference>
<dbReference type="GO" id="GO:0002088">
    <property type="term" value="P:lens development in camera-type eye"/>
    <property type="evidence" value="ECO:0007669"/>
    <property type="project" value="TreeGrafter"/>
</dbReference>
<dbReference type="GO" id="GO:0043066">
    <property type="term" value="P:negative regulation of apoptotic process"/>
    <property type="evidence" value="ECO:0007669"/>
    <property type="project" value="TreeGrafter"/>
</dbReference>
<dbReference type="GO" id="GO:0042026">
    <property type="term" value="P:protein refolding"/>
    <property type="evidence" value="ECO:0007669"/>
    <property type="project" value="TreeGrafter"/>
</dbReference>
<dbReference type="GO" id="GO:0009408">
    <property type="term" value="P:response to heat"/>
    <property type="evidence" value="ECO:0007669"/>
    <property type="project" value="TreeGrafter"/>
</dbReference>
<dbReference type="FunFam" id="2.60.40.790:FF:000008">
    <property type="entry name" value="Alpha-crystallin A chain"/>
    <property type="match status" value="1"/>
</dbReference>
<dbReference type="Gene3D" id="2.60.40.790">
    <property type="match status" value="1"/>
</dbReference>
<dbReference type="InterPro" id="IPR002068">
    <property type="entry name" value="A-crystallin/Hsp20_dom"/>
</dbReference>
<dbReference type="InterPro" id="IPR055269">
    <property type="entry name" value="Alpha-crystallin/HSP_16"/>
</dbReference>
<dbReference type="InterPro" id="IPR001436">
    <property type="entry name" value="Alpha-crystallin/sHSP_animal"/>
</dbReference>
<dbReference type="InterPro" id="IPR003090">
    <property type="entry name" value="Alpha-crystallin_N"/>
</dbReference>
<dbReference type="InterPro" id="IPR008978">
    <property type="entry name" value="HSP20-like_chaperone"/>
</dbReference>
<dbReference type="PANTHER" id="PTHR45640:SF14">
    <property type="entry name" value="ALPHA-CRYSTALLIN A CHAIN"/>
    <property type="match status" value="1"/>
</dbReference>
<dbReference type="PANTHER" id="PTHR45640">
    <property type="entry name" value="HEAT SHOCK PROTEIN HSP-12.2-RELATED"/>
    <property type="match status" value="1"/>
</dbReference>
<dbReference type="Pfam" id="PF00525">
    <property type="entry name" value="Crystallin"/>
    <property type="match status" value="1"/>
</dbReference>
<dbReference type="Pfam" id="PF00011">
    <property type="entry name" value="HSP20"/>
    <property type="match status" value="1"/>
</dbReference>
<dbReference type="PIRSF" id="PIRSF036514">
    <property type="entry name" value="Sm_HSP_B1"/>
    <property type="match status" value="1"/>
</dbReference>
<dbReference type="PRINTS" id="PR00299">
    <property type="entry name" value="ACRYSTALLIN"/>
</dbReference>
<dbReference type="SUPFAM" id="SSF49764">
    <property type="entry name" value="HSP20-like chaperones"/>
    <property type="match status" value="1"/>
</dbReference>
<dbReference type="PROSITE" id="PS01031">
    <property type="entry name" value="SHSP"/>
    <property type="match status" value="1"/>
</dbReference>
<evidence type="ECO:0000250" key="1"/>
<evidence type="ECO:0000250" key="2">
    <source>
        <dbReference type="UniProtKB" id="P02470"/>
    </source>
</evidence>
<evidence type="ECO:0000250" key="3">
    <source>
        <dbReference type="UniProtKB" id="P02474"/>
    </source>
</evidence>
<evidence type="ECO:0000250" key="4">
    <source>
        <dbReference type="UniProtKB" id="P02489"/>
    </source>
</evidence>
<evidence type="ECO:0000255" key="5">
    <source>
        <dbReference type="PROSITE-ProRule" id="PRU00285"/>
    </source>
</evidence>
<evidence type="ECO:0000256" key="6">
    <source>
        <dbReference type="SAM" id="MobiDB-lite"/>
    </source>
</evidence>
<evidence type="ECO:0000305" key="7"/>
<feature type="chain" id="PRO_0000125876" description="Alpha-crystallin A chain">
    <location>
        <begin position="1"/>
        <end position="173"/>
    </location>
</feature>
<feature type="domain" description="sHSP" evidence="5">
    <location>
        <begin position="52"/>
        <end position="162"/>
    </location>
</feature>
<feature type="region of interest" description="Required for complex formation with BFSP1 and BFSP2" evidence="4">
    <location>
        <begin position="1"/>
        <end position="63"/>
    </location>
</feature>
<feature type="region of interest" description="Disordered" evidence="6">
    <location>
        <begin position="145"/>
        <end position="173"/>
    </location>
</feature>
<feature type="compositionally biased region" description="Basic and acidic residues" evidence="6">
    <location>
        <begin position="153"/>
        <end position="167"/>
    </location>
</feature>
<feature type="binding site" evidence="2">
    <location>
        <position position="100"/>
    </location>
    <ligand>
        <name>Zn(2+)</name>
        <dbReference type="ChEBI" id="CHEBI:29105"/>
        <label>1</label>
    </ligand>
</feature>
<feature type="binding site" evidence="2">
    <location>
        <position position="102"/>
    </location>
    <ligand>
        <name>Zn(2+)</name>
        <dbReference type="ChEBI" id="CHEBI:29105"/>
        <label>1</label>
    </ligand>
</feature>
<feature type="binding site" evidence="2">
    <location>
        <position position="107"/>
    </location>
    <ligand>
        <name>Zn(2+)</name>
        <dbReference type="ChEBI" id="CHEBI:29105"/>
        <label>2</label>
    </ligand>
</feature>
<feature type="binding site" evidence="2">
    <location>
        <position position="154"/>
    </location>
    <ligand>
        <name>Zn(2+)</name>
        <dbReference type="ChEBI" id="CHEBI:29105"/>
        <label>3</label>
    </ligand>
</feature>
<feature type="modified residue" description="N-acetylmethionine" evidence="3 7">
    <location>
        <position position="1"/>
    </location>
</feature>
<feature type="modified residue" description="Deamidated glutamine; partial" evidence="1">
    <location>
        <position position="6"/>
    </location>
</feature>
<feature type="modified residue" description="Phosphoserine" evidence="4">
    <location>
        <position position="45"/>
    </location>
</feature>
<feature type="modified residue" description="Deamidated glutamine; partial" evidence="1">
    <location>
        <position position="50"/>
    </location>
</feature>
<feature type="modified residue" description="N6-acetyllysine" evidence="4">
    <location>
        <position position="70"/>
    </location>
</feature>
<feature type="modified residue" description="Deamidated glutamine; partial" evidence="1">
    <location>
        <position position="90"/>
    </location>
</feature>
<feature type="modified residue" description="N6-acetyllysine" evidence="4">
    <location>
        <position position="99"/>
    </location>
</feature>
<feature type="modified residue" description="Deamidated asparagine; partial" evidence="1">
    <location>
        <position position="101"/>
    </location>
</feature>
<feature type="modified residue" description="Phosphoserine" evidence="2">
    <location>
        <position position="122"/>
    </location>
</feature>
<feature type="modified residue" description="Deamidated asparagine; partial" evidence="1">
    <location>
        <position position="123"/>
    </location>
</feature>
<feature type="modified residue" description="Deamidated glutamine; partial" evidence="1">
    <location>
        <position position="147"/>
    </location>
</feature>
<feature type="glycosylation site" description="O-linked (GlcNAc) serine" evidence="1">
    <location>
        <position position="162"/>
    </location>
</feature>
<protein>
    <recommendedName>
        <fullName>Alpha-crystallin A chain</fullName>
    </recommendedName>
</protein>
<accession>P68283</accession>
<accession>P02491</accession>
<comment type="function">
    <text evidence="4">Contributes to the transparency and refractive index of the lens. Acts as a chaperone, preventing aggregation of various proteins under a wide range of stress conditions. Required for the correct formation of lens intermediate filaments as part of a complex composed of BFSP1, BFSP2 and CRYAA.</text>
</comment>
<comment type="subunit">
    <text evidence="2 4">Heteromer composed of three CRYAA and one CRYAB subunits. Inter-subunit bridging via zinc ions enhances stability, which is crucial as there is no protein turn over in the lens. Can also form homodimers and homotetramers (dimers of dimers) which serve as the building blocks of homooligomers (By similarity). Within homooligomers, the zinc-binding motif is created from residues of 3 different molecules. His-100 and Glu-102 from one molecule are ligands of the zinc ion, and His-107 and His-154 residues from additional molecules complete the site with tetrahedral coordination geometry (By similarity). Part of a complex required for lens intermediate filament formation composed of BFSP1, BFSP2 and CRYAA (By similarity).</text>
</comment>
<comment type="subcellular location">
    <subcellularLocation>
        <location evidence="4">Cytoplasm</location>
    </subcellularLocation>
    <subcellularLocation>
        <location evidence="4">Nucleus</location>
    </subcellularLocation>
    <text evidence="4">Translocates to the nucleus during heat shock and resides in sub-nuclear structures known as SC35 speckles or nuclear splicing speckles.</text>
</comment>
<comment type="PTM">
    <text evidence="4">Acetylation at Lys-70 may increase chaperone activity.</text>
</comment>
<comment type="PTM">
    <text evidence="4">Undergoes age-dependent proteolytical cleavage at the C-terminus.</text>
</comment>
<comment type="similarity">
    <text evidence="5">Belongs to the small heat shock protein (HSP20) family.</text>
</comment>
<proteinExistence type="evidence at protein level"/>
<reference key="1">
    <citation type="book" date="1980" name="Protides of the biological fluids, Proc. 28th colloquium">
        <title>Trends in the molecular evolution of alpha-crystallin.</title>
        <editorList>
            <person name="Peeters H."/>
        </editorList>
        <authorList>
            <person name="de Jong W.W."/>
            <person name="Zweers A."/>
            <person name="Goodman M."/>
        </authorList>
    </citation>
    <scope>PROTEIN SEQUENCE</scope>
</reference>
<name>CRYAA_PEDCA</name>
<organism>
    <name type="scientific">Pedetes capensis</name>
    <name type="common">Springhaas</name>
    <dbReference type="NCBI Taxonomy" id="10023"/>
    <lineage>
        <taxon>Eukaryota</taxon>
        <taxon>Metazoa</taxon>
        <taxon>Chordata</taxon>
        <taxon>Craniata</taxon>
        <taxon>Vertebrata</taxon>
        <taxon>Euteleostomi</taxon>
        <taxon>Mammalia</taxon>
        <taxon>Eutheria</taxon>
        <taxon>Euarchontoglires</taxon>
        <taxon>Glires</taxon>
        <taxon>Rodentia</taxon>
        <taxon>Anomaluromorpha</taxon>
        <taxon>Pedetidae</taxon>
        <taxon>Pedetes</taxon>
    </lineage>
</organism>
<gene>
    <name type="primary">CRYAA</name>
</gene>